<sequence>RHNQTGVLFCSAPGRRSGRQTYSRYQTLELEKEFLFNPYLTRKRRIEVSHALGLTERQVKIWFQNRRMKWKKENNKDKLPGARDEEKVEEEGNEEEEKEEEEKEENKD</sequence>
<dbReference type="EMBL" id="S76301">
    <property type="status" value="NOT_ANNOTATED_CDS"/>
    <property type="molecule type" value="Genomic_DNA"/>
</dbReference>
<dbReference type="EMBL" id="M37568">
    <property type="protein sequence ID" value="AAA41344.1"/>
    <property type="molecule type" value="Genomic_DNA"/>
</dbReference>
<dbReference type="PIR" id="D43559">
    <property type="entry name" value="D43559"/>
</dbReference>
<dbReference type="SMR" id="P18866"/>
<dbReference type="FunCoup" id="P18866">
    <property type="interactions" value="139"/>
</dbReference>
<dbReference type="STRING" id="10116.ENSRNOP00000035473"/>
<dbReference type="PhosphoSitePlus" id="P18866"/>
<dbReference type="PaxDb" id="10116-ENSRNOP00000035473"/>
<dbReference type="UCSC" id="RGD:1595784">
    <property type="organism name" value="rat"/>
</dbReference>
<dbReference type="AGR" id="RGD:2821"/>
<dbReference type="RGD" id="2821">
    <property type="gene designation" value="Hoxc8"/>
</dbReference>
<dbReference type="eggNOG" id="KOG0489">
    <property type="taxonomic scope" value="Eukaryota"/>
</dbReference>
<dbReference type="InParanoid" id="P18866"/>
<dbReference type="Proteomes" id="UP000002494">
    <property type="component" value="Unplaced"/>
</dbReference>
<dbReference type="GO" id="GO:0005634">
    <property type="term" value="C:nucleus"/>
    <property type="evidence" value="ECO:0000266"/>
    <property type="project" value="RGD"/>
</dbReference>
<dbReference type="GO" id="GO:0003677">
    <property type="term" value="F:DNA binding"/>
    <property type="evidence" value="ECO:0000266"/>
    <property type="project" value="RGD"/>
</dbReference>
<dbReference type="GO" id="GO:0000981">
    <property type="term" value="F:DNA-binding transcription factor activity, RNA polymerase II-specific"/>
    <property type="evidence" value="ECO:0007669"/>
    <property type="project" value="InterPro"/>
</dbReference>
<dbReference type="GO" id="GO:1990837">
    <property type="term" value="F:sequence-specific double-stranded DNA binding"/>
    <property type="evidence" value="ECO:0000266"/>
    <property type="project" value="RGD"/>
</dbReference>
<dbReference type="GO" id="GO:0009952">
    <property type="term" value="P:anterior/posterior pattern specification"/>
    <property type="evidence" value="ECO:0000266"/>
    <property type="project" value="RGD"/>
</dbReference>
<dbReference type="GO" id="GO:0000122">
    <property type="term" value="P:negative regulation of transcription by RNA polymerase II"/>
    <property type="evidence" value="ECO:0000266"/>
    <property type="project" value="RGD"/>
</dbReference>
<dbReference type="GO" id="GO:0030182">
    <property type="term" value="P:neuron differentiation"/>
    <property type="evidence" value="ECO:0000266"/>
    <property type="project" value="RGD"/>
</dbReference>
<dbReference type="GO" id="GO:0048705">
    <property type="term" value="P:skeletal system morphogenesis"/>
    <property type="evidence" value="ECO:0000266"/>
    <property type="project" value="RGD"/>
</dbReference>
<dbReference type="CDD" id="cd00086">
    <property type="entry name" value="homeodomain"/>
    <property type="match status" value="1"/>
</dbReference>
<dbReference type="FunFam" id="1.10.10.60:FF:000072">
    <property type="entry name" value="Homeobox protein Hox-B8"/>
    <property type="match status" value="1"/>
</dbReference>
<dbReference type="Gene3D" id="1.10.10.60">
    <property type="entry name" value="Homeodomain-like"/>
    <property type="match status" value="1"/>
</dbReference>
<dbReference type="InterPro" id="IPR050948">
    <property type="entry name" value="Antp_homeobox_TF"/>
</dbReference>
<dbReference type="InterPro" id="IPR001356">
    <property type="entry name" value="HD"/>
</dbReference>
<dbReference type="InterPro" id="IPR020479">
    <property type="entry name" value="HD_metazoa"/>
</dbReference>
<dbReference type="InterPro" id="IPR017970">
    <property type="entry name" value="Homeobox_CS"/>
</dbReference>
<dbReference type="InterPro" id="IPR009057">
    <property type="entry name" value="Homeodomain-like_sf"/>
</dbReference>
<dbReference type="InterPro" id="IPR000047">
    <property type="entry name" value="HTH_motif"/>
</dbReference>
<dbReference type="PANTHER" id="PTHR46166">
    <property type="entry name" value="HOMEOBOX DOMAIN-CONTAINING PROTEIN"/>
    <property type="match status" value="1"/>
</dbReference>
<dbReference type="PANTHER" id="PTHR46166:SF4">
    <property type="entry name" value="HOMEOBOX PROTEIN HOX-C8"/>
    <property type="match status" value="1"/>
</dbReference>
<dbReference type="Pfam" id="PF00046">
    <property type="entry name" value="Homeodomain"/>
    <property type="match status" value="1"/>
</dbReference>
<dbReference type="PRINTS" id="PR00024">
    <property type="entry name" value="HOMEOBOX"/>
</dbReference>
<dbReference type="PRINTS" id="PR00031">
    <property type="entry name" value="HTHREPRESSR"/>
</dbReference>
<dbReference type="SMART" id="SM00389">
    <property type="entry name" value="HOX"/>
    <property type="match status" value="1"/>
</dbReference>
<dbReference type="SUPFAM" id="SSF46689">
    <property type="entry name" value="Homeodomain-like"/>
    <property type="match status" value="1"/>
</dbReference>
<dbReference type="PROSITE" id="PS00027">
    <property type="entry name" value="HOMEOBOX_1"/>
    <property type="match status" value="1"/>
</dbReference>
<dbReference type="PROSITE" id="PS50071">
    <property type="entry name" value="HOMEOBOX_2"/>
    <property type="match status" value="1"/>
</dbReference>
<accession>P18866</accession>
<protein>
    <recommendedName>
        <fullName>Homeobox protein Hox-C8</fullName>
    </recommendedName>
    <alternativeName>
        <fullName>Homeobox protein R4</fullName>
    </alternativeName>
</protein>
<comment type="function">
    <text>Sequence-specific transcription factor which is part of a developmental regulatory system that provides cells with specific positional identities on the anterior-posterior axis.</text>
</comment>
<comment type="subunit">
    <text evidence="1">Interacts with HOMEZ. Forms a DNA-binding heterodimer with transcription factor PBX1.</text>
</comment>
<comment type="subcellular location">
    <subcellularLocation>
        <location>Nucleus</location>
    </subcellularLocation>
</comment>
<comment type="tissue specificity">
    <text>Predominantly spinal cord and kidney.</text>
</comment>
<comment type="similarity">
    <text evidence="4">Belongs to the Antp homeobox family.</text>
</comment>
<proteinExistence type="evidence at transcript level"/>
<feature type="chain" id="PRO_0000200182" description="Homeobox protein Hox-C8">
    <location>
        <begin position="1" status="less than"/>
        <end position="108"/>
    </location>
</feature>
<feature type="DNA-binding region" description="Homeobox" evidence="2">
    <location>
        <begin position="15"/>
        <end position="74"/>
    </location>
</feature>
<feature type="region of interest" description="Disordered" evidence="3">
    <location>
        <begin position="73"/>
        <end position="108"/>
    </location>
</feature>
<feature type="compositionally biased region" description="Basic and acidic residues" evidence="3">
    <location>
        <begin position="73"/>
        <end position="86"/>
    </location>
</feature>
<feature type="compositionally biased region" description="Acidic residues" evidence="3">
    <location>
        <begin position="87"/>
        <end position="108"/>
    </location>
</feature>
<feature type="non-terminal residue">
    <location>
        <position position="1"/>
    </location>
</feature>
<reference key="1">
    <citation type="journal article" date="1994" name="Biochem. Genet.">
        <title>Cloning of rat homeobox genes.</title>
        <authorList>
            <person name="Sakoyama Y."/>
            <person name="Mizuta I."/>
            <person name="Ogasawara N."/>
            <person name="Yoshikawa H."/>
        </authorList>
    </citation>
    <scope>NUCLEOTIDE SEQUENCE [GENOMIC DNA] OF 1-74</scope>
    <source>
        <strain>Sprague-Dawley</strain>
        <tissue>Liver</tissue>
    </source>
</reference>
<reference key="2">
    <citation type="journal article" date="1988" name="Development">
        <title>The expression of rat homeobox-containing genes is developmentally regulated and tissue specific.</title>
        <authorList>
            <person name="Falzon M."/>
            <person name="Chung S.Y."/>
        </authorList>
    </citation>
    <scope>NUCLEOTIDE SEQUENCE [GENOMIC DNA] OF 5-108</scope>
    <source>
        <strain>Sprague-Dawley</strain>
    </source>
</reference>
<evidence type="ECO:0000250" key="1">
    <source>
        <dbReference type="UniProtKB" id="P31273"/>
    </source>
</evidence>
<evidence type="ECO:0000255" key="2">
    <source>
        <dbReference type="PROSITE-ProRule" id="PRU00108"/>
    </source>
</evidence>
<evidence type="ECO:0000256" key="3">
    <source>
        <dbReference type="SAM" id="MobiDB-lite"/>
    </source>
</evidence>
<evidence type="ECO:0000305" key="4"/>
<gene>
    <name type="primary">Hoxc8</name>
    <name type="synonym">Hoxc-8</name>
</gene>
<name>HXC8_RAT</name>
<organism>
    <name type="scientific">Rattus norvegicus</name>
    <name type="common">Rat</name>
    <dbReference type="NCBI Taxonomy" id="10116"/>
    <lineage>
        <taxon>Eukaryota</taxon>
        <taxon>Metazoa</taxon>
        <taxon>Chordata</taxon>
        <taxon>Craniata</taxon>
        <taxon>Vertebrata</taxon>
        <taxon>Euteleostomi</taxon>
        <taxon>Mammalia</taxon>
        <taxon>Eutheria</taxon>
        <taxon>Euarchontoglires</taxon>
        <taxon>Glires</taxon>
        <taxon>Rodentia</taxon>
        <taxon>Myomorpha</taxon>
        <taxon>Muroidea</taxon>
        <taxon>Muridae</taxon>
        <taxon>Murinae</taxon>
        <taxon>Rattus</taxon>
    </lineage>
</organism>
<keyword id="KW-0217">Developmental protein</keyword>
<keyword id="KW-0238">DNA-binding</keyword>
<keyword id="KW-0371">Homeobox</keyword>
<keyword id="KW-0539">Nucleus</keyword>
<keyword id="KW-1185">Reference proteome</keyword>
<keyword id="KW-0804">Transcription</keyword>
<keyword id="KW-0805">Transcription regulation</keyword>